<reference key="1">
    <citation type="journal article" date="2000" name="J. Biol. Chem.">
        <title>Complete sequence of the 24-mer hemocyanin of the tarantula Eurypelma californicum. Structure and intramolecular evolution of the subunits.</title>
        <authorList>
            <person name="Voit R."/>
            <person name="Feldmaier-Fuchs G."/>
            <person name="Schweikardt T."/>
            <person name="Decker H."/>
            <person name="Burmester T."/>
        </authorList>
    </citation>
    <scope>NUCLEOTIDE SEQUENCE [MRNA]</scope>
    <source>
        <tissue>Heart</tissue>
    </source>
</reference>
<reference key="2">
    <citation type="journal article" date="1983" name="Hoppe-Seyler's Z. Physiol. Chem.">
        <title>Hemocyanins in spiders, XIX. Complete amino-acid sequence of subunit d from Eurypelma californicum hemocyanin, and comparison to chain e.</title>
        <authorList>
            <person name="Schartau W."/>
            <person name="Eyerle F."/>
            <person name="Reisinger P."/>
            <person name="Geisert H."/>
            <person name="Storz H."/>
            <person name="Linzen B."/>
        </authorList>
    </citation>
    <scope>PROTEIN SEQUENCE OF 2-627</scope>
</reference>
<feature type="initiator methionine" description="Removed" evidence="2">
    <location>
        <position position="1"/>
    </location>
</feature>
<feature type="chain" id="PRO_0000204268" description="Hemocyanin D chain">
    <location>
        <begin position="2"/>
        <end position="627"/>
    </location>
</feature>
<feature type="binding site" evidence="1">
    <location>
        <position position="171"/>
    </location>
    <ligand>
        <name>Cu cation</name>
        <dbReference type="ChEBI" id="CHEBI:23378"/>
        <label>1</label>
    </ligand>
</feature>
<feature type="binding site" evidence="1">
    <location>
        <position position="175"/>
    </location>
    <ligand>
        <name>Cu cation</name>
        <dbReference type="ChEBI" id="CHEBI:23378"/>
        <label>1</label>
    </ligand>
</feature>
<feature type="binding site" evidence="1">
    <location>
        <position position="202"/>
    </location>
    <ligand>
        <name>Cu cation</name>
        <dbReference type="ChEBI" id="CHEBI:23378"/>
        <label>1</label>
    </ligand>
</feature>
<feature type="binding site" evidence="1">
    <location>
        <position position="322"/>
    </location>
    <ligand>
        <name>Cu cation</name>
        <dbReference type="ChEBI" id="CHEBI:23378"/>
        <label>2</label>
    </ligand>
</feature>
<feature type="binding site" evidence="1">
    <location>
        <position position="326"/>
    </location>
    <ligand>
        <name>Cu cation</name>
        <dbReference type="ChEBI" id="CHEBI:23378"/>
        <label>2</label>
    </ligand>
</feature>
<feature type="binding site" evidence="1">
    <location>
        <position position="362"/>
    </location>
    <ligand>
        <name>Cu cation</name>
        <dbReference type="ChEBI" id="CHEBI:23378"/>
        <label>2</label>
    </ligand>
</feature>
<feature type="glycosylation site" description="N-linked (GlcNAc...) asparagine" evidence="3">
    <location>
        <position position="445"/>
    </location>
</feature>
<feature type="disulfide bond" evidence="1">
    <location>
        <begin position="531"/>
        <end position="579"/>
    </location>
</feature>
<feature type="sequence conflict" description="In Ref. 1." evidence="3" ref="1">
    <original>SC</original>
    <variation>GS</variation>
    <location>
        <begin position="47"/>
        <end position="48"/>
    </location>
</feature>
<feature type="sequence conflict" description="In Ref. 2; AA sequence." evidence="3" ref="2">
    <original>ETLAEALVE</original>
    <variation>IVFIEIIHD</variation>
    <location>
        <begin position="58"/>
        <end position="66"/>
    </location>
</feature>
<feature type="sequence conflict" description="In Ref. 2; AA sequence." evidence="3" ref="2">
    <original>I</original>
    <variation>L</variation>
    <location>
        <position position="74"/>
    </location>
</feature>
<feature type="sequence conflict" description="In Ref. 2; AA sequence." evidence="3" ref="2">
    <original>I</original>
    <variation>L</variation>
    <location>
        <position position="97"/>
    </location>
</feature>
<feature type="sequence conflict" description="In Ref. 2; AA sequence." evidence="3" ref="2">
    <original>L</original>
    <variation>I</variation>
    <location>
        <position position="108"/>
    </location>
</feature>
<feature type="sequence conflict" description="In Ref. 2; AA sequence." evidence="3" ref="2">
    <original>V</original>
    <variation>I</variation>
    <location>
        <position position="134"/>
    </location>
</feature>
<feature type="sequence conflict" description="In Ref. 2; AA sequence." evidence="3" ref="2">
    <original>I</original>
    <variation>F</variation>
    <location>
        <position position="186"/>
    </location>
</feature>
<feature type="sequence conflict" description="In Ref. 2; AA sequence." evidence="3" ref="2">
    <original>I</original>
    <variation>L</variation>
    <location>
        <position position="222"/>
    </location>
</feature>
<feature type="sequence conflict" description="In Ref. 2; AA sequence." evidence="3" ref="2">
    <original>L</original>
    <variation>I</variation>
    <location>
        <position position="227"/>
    </location>
</feature>
<feature type="sequence conflict" description="In Ref. 2; AA sequence." evidence="3" ref="2">
    <original>R</original>
    <variation>S</variation>
    <location>
        <position position="239"/>
    </location>
</feature>
<feature type="sequence conflict" description="In Ref. 2; AA sequence." evidence="3" ref="2">
    <location>
        <position position="266"/>
    </location>
</feature>
<feature type="sequence conflict" description="In Ref. 2; AA sequence." evidence="3" ref="2">
    <original>L</original>
    <variation>I</variation>
    <location>
        <position position="293"/>
    </location>
</feature>
<feature type="sequence conflict" description="In Ref. 2; AA sequence." evidence="3" ref="2">
    <original>LNIL</original>
    <variation>INVI</variation>
    <location>
        <begin position="299"/>
        <end position="302"/>
    </location>
</feature>
<feature type="sequence conflict" description="In Ref. 2; AA sequence." evidence="3" ref="2">
    <original>F</original>
    <variation>Y</variation>
    <location>
        <position position="317"/>
    </location>
</feature>
<feature type="sequence conflict" description="In Ref. 2; AA sequence." evidence="3" ref="2">
    <original>LI</original>
    <variation>IL</variation>
    <location>
        <begin position="403"/>
        <end position="404"/>
    </location>
</feature>
<feature type="sequence conflict" description="In Ref. 2; AA sequence." evidence="3" ref="2">
    <original>INL</original>
    <variation>LNI</variation>
    <location>
        <begin position="419"/>
        <end position="421"/>
    </location>
</feature>
<feature type="sequence conflict" description="In Ref. 2; AA sequence." evidence="3" ref="2">
    <original>Y</original>
    <variation>YNY</variation>
    <location>
        <position position="429"/>
    </location>
</feature>
<feature type="sequence conflict" description="In Ref. 2; AA sequence." evidence="3" ref="2">
    <original>I</original>
    <variation>L</variation>
    <location>
        <position position="471"/>
    </location>
</feature>
<feature type="sequence conflict" description="In Ref. 2; AA sequence." evidence="3" ref="2">
    <original>CGW</original>
    <variation>DGK</variation>
    <location>
        <begin position="531"/>
        <end position="533"/>
    </location>
</feature>
<feature type="sequence conflict" description="In Ref. 2; AA sequence." evidence="3" ref="2">
    <original>K</original>
    <variation>S</variation>
    <location>
        <position position="562"/>
    </location>
</feature>
<feature type="sequence conflict" description="In Ref. 2; AA sequence." evidence="3" ref="2">
    <original>CS</original>
    <variation>DQ</variation>
    <location>
        <begin position="572"/>
        <end position="573"/>
    </location>
</feature>
<dbReference type="EMBL" id="AJ290430">
    <property type="protein sequence ID" value="CAB89499.1"/>
    <property type="molecule type" value="mRNA"/>
</dbReference>
<dbReference type="PIR" id="A02565">
    <property type="entry name" value="BHTLD"/>
</dbReference>
<dbReference type="SMR" id="P02241"/>
<dbReference type="GlyCosmos" id="P02241">
    <property type="glycosylation" value="1 site, No reported glycans"/>
</dbReference>
<dbReference type="GO" id="GO:0005576">
    <property type="term" value="C:extracellular region"/>
    <property type="evidence" value="ECO:0007669"/>
    <property type="project" value="UniProtKB-SubCell"/>
</dbReference>
<dbReference type="GO" id="GO:0031404">
    <property type="term" value="F:chloride ion binding"/>
    <property type="evidence" value="ECO:0000250"/>
    <property type="project" value="UniProtKB"/>
</dbReference>
<dbReference type="GO" id="GO:0005507">
    <property type="term" value="F:copper ion binding"/>
    <property type="evidence" value="ECO:0000250"/>
    <property type="project" value="UniProtKB"/>
</dbReference>
<dbReference type="GO" id="GO:0016491">
    <property type="term" value="F:oxidoreductase activity"/>
    <property type="evidence" value="ECO:0007669"/>
    <property type="project" value="InterPro"/>
</dbReference>
<dbReference type="GO" id="GO:0005344">
    <property type="term" value="F:oxygen carrier activity"/>
    <property type="evidence" value="ECO:0007669"/>
    <property type="project" value="UniProtKB-KW"/>
</dbReference>
<dbReference type="FunFam" id="1.10.1280.10:FF:000004">
    <property type="entry name" value="Hemocyanin subunit 2"/>
    <property type="match status" value="1"/>
</dbReference>
<dbReference type="FunFam" id="2.60.40.1520:FF:000001">
    <property type="entry name" value="Hemocyanin subunit 2"/>
    <property type="match status" value="1"/>
</dbReference>
<dbReference type="FunFam" id="1.20.1370.10:FF:000002">
    <property type="entry name" value="Hemocyanin subunit B"/>
    <property type="match status" value="1"/>
</dbReference>
<dbReference type="Gene3D" id="1.10.1280.10">
    <property type="entry name" value="Di-copper center containing domain from catechol oxidase"/>
    <property type="match status" value="1"/>
</dbReference>
<dbReference type="Gene3D" id="2.60.40.1520">
    <property type="entry name" value="Hemocyanin, C-terminal domain"/>
    <property type="match status" value="1"/>
</dbReference>
<dbReference type="Gene3D" id="1.20.1370.10">
    <property type="entry name" value="Hemocyanin, N-terminal domain"/>
    <property type="match status" value="1"/>
</dbReference>
<dbReference type="InterPro" id="IPR008922">
    <property type="entry name" value="Di-copper_centre_dom_sf"/>
</dbReference>
<dbReference type="InterPro" id="IPR013788">
    <property type="entry name" value="Hemocyanin/hexamerin"/>
</dbReference>
<dbReference type="InterPro" id="IPR000896">
    <property type="entry name" value="Hemocyanin/hexamerin_mid_dom"/>
</dbReference>
<dbReference type="InterPro" id="IPR005203">
    <property type="entry name" value="Hemocyanin_C"/>
</dbReference>
<dbReference type="InterPro" id="IPR037020">
    <property type="entry name" value="Hemocyanin_C_sf"/>
</dbReference>
<dbReference type="InterPro" id="IPR005204">
    <property type="entry name" value="Hemocyanin_N"/>
</dbReference>
<dbReference type="InterPro" id="IPR036697">
    <property type="entry name" value="Hemocyanin_N_sf"/>
</dbReference>
<dbReference type="InterPro" id="IPR014756">
    <property type="entry name" value="Ig_E-set"/>
</dbReference>
<dbReference type="InterPro" id="IPR002227">
    <property type="entry name" value="Tyrosinase_Cu-bd"/>
</dbReference>
<dbReference type="PANTHER" id="PTHR11511:SF5">
    <property type="entry name" value="FAT-BODY PROTEIN 1-RELATED"/>
    <property type="match status" value="1"/>
</dbReference>
<dbReference type="PANTHER" id="PTHR11511">
    <property type="entry name" value="LARVAL STORAGE PROTEIN/PHENOLOXIDASE"/>
    <property type="match status" value="1"/>
</dbReference>
<dbReference type="Pfam" id="PF03723">
    <property type="entry name" value="Hemocyanin_C"/>
    <property type="match status" value="1"/>
</dbReference>
<dbReference type="Pfam" id="PF00372">
    <property type="entry name" value="Hemocyanin_M"/>
    <property type="match status" value="1"/>
</dbReference>
<dbReference type="Pfam" id="PF03722">
    <property type="entry name" value="Hemocyanin_N"/>
    <property type="match status" value="1"/>
</dbReference>
<dbReference type="PRINTS" id="PR00187">
    <property type="entry name" value="HAEMOCYANIN"/>
</dbReference>
<dbReference type="SUPFAM" id="SSF48056">
    <property type="entry name" value="Di-copper centre-containing domain"/>
    <property type="match status" value="1"/>
</dbReference>
<dbReference type="SUPFAM" id="SSF81296">
    <property type="entry name" value="E set domains"/>
    <property type="match status" value="1"/>
</dbReference>
<dbReference type="SUPFAM" id="SSF48050">
    <property type="entry name" value="Hemocyanin, N-terminal domain"/>
    <property type="match status" value="1"/>
</dbReference>
<dbReference type="PROSITE" id="PS00209">
    <property type="entry name" value="HEMOCYANIN_1"/>
    <property type="match status" value="1"/>
</dbReference>
<dbReference type="PROSITE" id="PS00210">
    <property type="entry name" value="HEMOCYANIN_2"/>
    <property type="match status" value="1"/>
</dbReference>
<dbReference type="PROSITE" id="PS00498">
    <property type="entry name" value="TYROSINASE_2"/>
    <property type="match status" value="1"/>
</dbReference>
<name>HCYD_APHSP</name>
<comment type="function">
    <text>Hemocyanins are copper-containing oxygen carriers occurring freely dissolved in the hemolymph of many mollusks and arthropods.</text>
</comment>
<comment type="subunit">
    <text>Tarantula hemocyanin is a 24-chain polymer with seven different chains identified.</text>
</comment>
<comment type="subcellular location">
    <subcellularLocation>
        <location>Secreted</location>
        <location>Extracellular space</location>
    </subcellularLocation>
</comment>
<comment type="tissue specificity">
    <text>Hemolymph.</text>
</comment>
<comment type="miscellaneous">
    <text>The two copper ions bound each have 3 nitrogen ligands (presumably contributed by His residues) and share a bridging ligand (possibly contributed by a Tyr residue) in addition to binding oxygen.</text>
</comment>
<comment type="similarity">
    <text evidence="3">Belongs to the tyrosinase family. Hemocyanin subfamily.</text>
</comment>
<organism>
    <name type="scientific">Aphonopelma sp.</name>
    <name type="common">American tarantula</name>
    <dbReference type="NCBI Taxonomy" id="29932"/>
    <lineage>
        <taxon>Eukaryota</taxon>
        <taxon>Metazoa</taxon>
        <taxon>Ecdysozoa</taxon>
        <taxon>Arthropoda</taxon>
        <taxon>Chelicerata</taxon>
        <taxon>Arachnida</taxon>
        <taxon>Araneae</taxon>
        <taxon>Mygalomorphae</taxon>
        <taxon>Theraphosidae</taxon>
        <taxon>Aphonopelma</taxon>
    </lineage>
</organism>
<accession>P02241</accession>
<accession>Q9NFH8</accession>
<gene>
    <name type="primary">HCD</name>
</gene>
<sequence length="627" mass="72123">MTIADHQARILPLFKKLTSLSPDPLPEAERDPRLKGVGFLPRGTLFSCFHEEHLAEAETLAEALVEAKNFDDFIALATNARAVVNEGLYAFAMSVAILSRDDCNGVVLPPIQEVFPDRFVPAETINRALKVDKVSDPNKDTVVPIQKTGNIRDPEYNVAYFREDIGINSHHWHWHLVYPAFYDADIFGKIKDRKGELFYYMHQQMCARYDCERLSVGLQRMIPFQNLDDELEGYSPHLRSLVSGLSYGSRPAGMHLRDINDCSVQDMERWRERILDAIHTGLVTDSHGKEIKLTEENGLNILGALIESSHDSVNKPFYGTLHNWGHVMIARIHDADGRYRTNPGVMDDTSTSLRDPIFYRYHRWMDNIFQEYKHRLPSYTHQQLDFPGVRISRVTVRSKVPNLIHTYSKDSLLELSHGINLKGHIQVKYEHLDHEPYNYEIEVDNRTGEARETCVRIFLAPKYDELGNRLILEEQRRLYIELDKFHRRLEPGKNVLVRASGDSSVTLSKVPTFEELESGNANVNPNEYCSCGWPEHMLVPRGKERGMDFYLFVMLTDYEEDKVQGAGEQTICSDAVSYCGAKDQKYPDKKAMGYPFDRPIQVRTPSQFKTPNMAFQEIIIQYEGHKH</sequence>
<evidence type="ECO:0000250" key="1"/>
<evidence type="ECO:0000269" key="2">
    <source>
    </source>
</evidence>
<evidence type="ECO:0000305" key="3"/>
<protein>
    <recommendedName>
        <fullName>Hemocyanin D chain</fullName>
        <shortName>HcD</shortName>
    </recommendedName>
</protein>
<proteinExistence type="evidence at protein level"/>
<keyword id="KW-0186">Copper</keyword>
<keyword id="KW-0903">Direct protein sequencing</keyword>
<keyword id="KW-1015">Disulfide bond</keyword>
<keyword id="KW-0325">Glycoprotein</keyword>
<keyword id="KW-0479">Metal-binding</keyword>
<keyword id="KW-0561">Oxygen transport</keyword>
<keyword id="KW-0964">Secreted</keyword>
<keyword id="KW-0813">Transport</keyword>